<reference evidence="10" key="1">
    <citation type="journal article" date="1998" name="Science">
        <title>Genome sequence of the nematode C. elegans: a platform for investigating biology.</title>
        <authorList>
            <consortium name="The C. elegans sequencing consortium"/>
        </authorList>
    </citation>
    <scope>NUCLEOTIDE SEQUENCE [LARGE SCALE GENOMIC DNA]</scope>
    <source>
        <strain evidence="10">Bristol N2</strain>
    </source>
</reference>
<reference evidence="9" key="2">
    <citation type="journal article" date="2016" name="Proc. Natl. Acad. Sci. U.S.A.">
        <title>Structural characterization of acyl-CoA oxidases reveals a direct link between pheromone biosynthesis and metabolic state in Caenorhabditis elegans.</title>
        <authorList>
            <person name="Zhang X."/>
            <person name="Li K."/>
            <person name="Jones R.A."/>
            <person name="Bruner S.D."/>
            <person name="Butcher R.A."/>
        </authorList>
    </citation>
    <scope>COFACTOR</scope>
    <scope>ACTIVITY REGULATION</scope>
</reference>
<reference evidence="9" key="3">
    <citation type="journal article" date="2018" name="Elife">
        <title>Biosynthetic tailoring of existing ascaroside pheromones alters their biological function in C. elegans.</title>
        <authorList>
            <person name="Zhou Y."/>
            <person name="Wang Y."/>
            <person name="Zhang X."/>
            <person name="Bhar S."/>
            <person name="Jones Lipinski R.A."/>
            <person name="Han J."/>
            <person name="Feng L."/>
            <person name="Butcher R.A."/>
        </authorList>
    </citation>
    <scope>FUNCTION</scope>
    <scope>CATALYTIC ACTIVITY</scope>
    <scope>PATHWAY</scope>
    <scope>SUBCELLULAR LOCATION</scope>
    <scope>TISSUE SPECIFICITY</scope>
</reference>
<feature type="chain" id="PRO_0000452301" description="Acyl-coenzyme A oxidase acox-3">
    <location>
        <begin position="1"/>
        <end position="667"/>
    </location>
</feature>
<feature type="short sequence motif" description="Microbody targeting signal" evidence="3">
    <location>
        <begin position="665"/>
        <end position="667"/>
    </location>
</feature>
<feature type="active site" description="Proton acceptor" evidence="5">
    <location>
        <position position="433"/>
    </location>
</feature>
<feature type="binding site" description="in other chain" evidence="2">
    <location>
        <begin position="138"/>
        <end position="141"/>
    </location>
    <ligand>
        <name>FAD</name>
        <dbReference type="ChEBI" id="CHEBI:57692"/>
        <note>ligand shared between dimeric partners</note>
    </ligand>
</feature>
<feature type="binding site" description="in other chain" evidence="2">
    <location>
        <begin position="146"/>
        <end position="147"/>
    </location>
    <ligand>
        <name>FAD</name>
        <dbReference type="ChEBI" id="CHEBI:57692"/>
        <note>ligand shared between dimeric partners</note>
    </ligand>
</feature>
<feature type="binding site" description="in other chain" evidence="2 6">
    <location>
        <position position="178"/>
    </location>
    <ligand>
        <name>FAD</name>
        <dbReference type="ChEBI" id="CHEBI:57692"/>
        <note>ligand shared between dimeric partners</note>
    </ligand>
</feature>
<feature type="binding site" evidence="2">
    <location>
        <position position="313"/>
    </location>
    <ligand>
        <name>FAD</name>
        <dbReference type="ChEBI" id="CHEBI:57692"/>
        <note>ligand shared between dimeric partners</note>
    </ligand>
</feature>
<feature type="binding site" evidence="2">
    <location>
        <begin position="334"/>
        <end position="337"/>
    </location>
    <ligand>
        <name>FAD</name>
        <dbReference type="ChEBI" id="CHEBI:57692"/>
        <note>ligand shared between dimeric partners</note>
    </ligand>
</feature>
<feature type="binding site" evidence="1">
    <location>
        <position position="410"/>
    </location>
    <ligand>
        <name>FAD</name>
        <dbReference type="ChEBI" id="CHEBI:57692"/>
        <note>ligand shared between dimeric partners</note>
    </ligand>
</feature>
<feature type="binding site" description="in other chain" evidence="1">
    <location>
        <position position="435"/>
    </location>
    <ligand>
        <name>FAD</name>
        <dbReference type="ChEBI" id="CHEBI:57692"/>
        <note>ligand shared between dimeric partners</note>
    </ligand>
</feature>
<proteinExistence type="evidence at protein level"/>
<accession>Q20992</accession>
<gene>
    <name evidence="11" type="primary">acox-3</name>
    <name evidence="11" type="synonym">acox-6</name>
    <name evidence="11" type="ORF">F58F9.7</name>
</gene>
<evidence type="ECO:0000250" key="1">
    <source>
        <dbReference type="UniProtKB" id="O62137"/>
    </source>
</evidence>
<evidence type="ECO:0000250" key="2">
    <source>
        <dbReference type="UniProtKB" id="O62140"/>
    </source>
</evidence>
<evidence type="ECO:0000255" key="3"/>
<evidence type="ECO:0000255" key="4">
    <source>
        <dbReference type="PIRNR" id="PIRNR000168"/>
    </source>
</evidence>
<evidence type="ECO:0000255" key="5">
    <source>
        <dbReference type="PIRSR" id="PIRSR000168-1"/>
    </source>
</evidence>
<evidence type="ECO:0000255" key="6">
    <source>
        <dbReference type="PIRSR" id="PIRSR000168-2"/>
    </source>
</evidence>
<evidence type="ECO:0000269" key="7">
    <source>
    </source>
</evidence>
<evidence type="ECO:0000269" key="8">
    <source>
    </source>
</evidence>
<evidence type="ECO:0000305" key="9"/>
<evidence type="ECO:0000312" key="10">
    <source>
        <dbReference type="Proteomes" id="UP000001940"/>
    </source>
</evidence>
<evidence type="ECO:0000312" key="11">
    <source>
        <dbReference type="WormBase" id="F58F9.7"/>
    </source>
</evidence>
<protein>
    <recommendedName>
        <fullName evidence="9">Acyl-coenzyme A oxidase acox-3</fullName>
        <ecNumber evidence="8">1.3.3.-</ecNumber>
    </recommendedName>
</protein>
<keyword id="KW-0274">FAD</keyword>
<keyword id="KW-0276">Fatty acid metabolism</keyword>
<keyword id="KW-0285">Flavoprotein</keyword>
<keyword id="KW-0443">Lipid metabolism</keyword>
<keyword id="KW-0560">Oxidoreductase</keyword>
<keyword id="KW-0576">Peroxisome</keyword>
<keyword id="KW-1185">Reference proteome</keyword>
<name>ACX3_CAEEL</name>
<sequence length="667" mass="74887">MSAPLIDKYRKMATFDWKKLKAAVEGEEHVRLKSEVVAKMKSEPVFHRDYRVLSREEQREVVHQRWKKIVEWGLFKDPYSDLENFHALTETLEAYDQGTSARLFLHGNVFGAAVKSMGTDRHKDLIQKTENNEIVGAFCLTEVGHGSNTAEIQTTATFDNGELVFNTPSVSAIKCWAGNLAHSATHVVVYAQLHVEGKNEGFHGFVIQVRCPRTFQTLPGITIGDMGSKPGCWQGVENGWMEFKNHRAPLSALLNKGCDITPDGKYVTSFKSASEKQSVSLGTLSVGRLGIIAKGMMACTFASTIAIRYSVARRQFGPVKGAENEIPVLEYPLQQYRLFPYLSAAICIRIFQKKFVGHFTEYMMRVIMGEKSDELSEFSKEVHALSSGAKPVATWLGVESLGEARKACGGHGYLQMSRLNTLRDDNDPSQTFEGENFMILQQTSNILLGKAQSIGSIETPMSTMSFLNQKPSKFSSWSSNPVNDVLSAYRYLTYHLLQTTSAEAYRLKASGKNSFEVRNEIQIHRAVNLSVAYTEHTMIHWVQQFLKEIEDQSVKPVLQKVLNLFSLFLLERHLATLYITGYASGGKFGEDLREKLRLAVAELKPEAIALVDSIAPDDFILHSALGASDGKAYEHIMEEFRKYTNEQPRWVCDLAQFLQKRSQGSKL</sequence>
<organism evidence="10">
    <name type="scientific">Caenorhabditis elegans</name>
    <dbReference type="NCBI Taxonomy" id="6239"/>
    <lineage>
        <taxon>Eukaryota</taxon>
        <taxon>Metazoa</taxon>
        <taxon>Ecdysozoa</taxon>
        <taxon>Nematoda</taxon>
        <taxon>Chromadorea</taxon>
        <taxon>Rhabditida</taxon>
        <taxon>Rhabditina</taxon>
        <taxon>Rhabditomorpha</taxon>
        <taxon>Rhabditoidea</taxon>
        <taxon>Rhabditidae</taxon>
        <taxon>Peloderinae</taxon>
        <taxon>Caenorhabditis</taxon>
    </lineage>
</organism>
<comment type="function">
    <text evidence="8">Involved in the first step of peroxisomal beta-oxidation by catalyzing the desaturation of fatty acid-derived side chains of ascaroside pheromones, which regulates development and behavior (PubMed:29863473). Specifically, shortens indol-3-carbonyl(IC)-ascarosides with 7-carbon (IC-asc-C7) or 9-carbon (IC-asc-C9) side chains and contributes to the shortening of ascarosides with 13-carbon (asc-C13) and 15-carbon (asc-C15) side chains (PubMed:29863473).</text>
</comment>
<comment type="catalytic activity">
    <reaction evidence="8">
        <text>IC-asc-C7-CoA + O2 = IC-asc-DeltaC7-CoA + H2O2</text>
        <dbReference type="Rhea" id="RHEA:66232"/>
        <dbReference type="ChEBI" id="CHEBI:15379"/>
        <dbReference type="ChEBI" id="CHEBI:16240"/>
        <dbReference type="ChEBI" id="CHEBI:166976"/>
        <dbReference type="ChEBI" id="CHEBI:166977"/>
    </reaction>
</comment>
<comment type="catalytic activity">
    <reaction evidence="8">
        <text>IC-asc-C9-CoA + O2 = IC-asc-DeltaC9-CoA + H2O2</text>
        <dbReference type="Rhea" id="RHEA:66236"/>
        <dbReference type="ChEBI" id="CHEBI:15379"/>
        <dbReference type="ChEBI" id="CHEBI:16240"/>
        <dbReference type="ChEBI" id="CHEBI:166973"/>
        <dbReference type="ChEBI" id="CHEBI:166974"/>
    </reaction>
</comment>
<comment type="catalytic activity">
    <reaction evidence="8">
        <text>asc-C13-CoA + O2 = asc-DeltaC13-CoA + H2O2</text>
        <dbReference type="Rhea" id="RHEA:66228"/>
        <dbReference type="ChEBI" id="CHEBI:15379"/>
        <dbReference type="ChEBI" id="CHEBI:16240"/>
        <dbReference type="ChEBI" id="CHEBI:139652"/>
        <dbReference type="ChEBI" id="CHEBI:139655"/>
    </reaction>
</comment>
<comment type="cofactor">
    <cofactor evidence="7">
        <name>FAD</name>
        <dbReference type="ChEBI" id="CHEBI:57692"/>
    </cofactor>
</comment>
<comment type="activity regulation">
    <text evidence="7">In contrast to other acyl-coenzyme A oxidases which bind to and are activated by ATP, does not bind ATP.</text>
</comment>
<comment type="pathway">
    <text evidence="8">Lipid metabolism; peroxisomal fatty acid beta-oxidation.</text>
</comment>
<comment type="subunit">
    <text evidence="2">Homodimer.</text>
</comment>
<comment type="subcellular location">
    <subcellularLocation>
        <location evidence="8">Peroxisome</location>
    </subcellularLocation>
</comment>
<comment type="tissue specificity">
    <text evidence="8">Expressed in intestine.</text>
</comment>
<comment type="similarity">
    <text evidence="4">Belongs to the acyl-CoA oxidase family.</text>
</comment>
<dbReference type="EC" id="1.3.3.-" evidence="8"/>
<dbReference type="EMBL" id="BX284604">
    <property type="protein sequence ID" value="CCD67635.1"/>
    <property type="molecule type" value="Genomic_DNA"/>
</dbReference>
<dbReference type="PIR" id="T28847">
    <property type="entry name" value="T28847"/>
</dbReference>
<dbReference type="RefSeq" id="NP_500943.1">
    <property type="nucleotide sequence ID" value="NM_068542.8"/>
</dbReference>
<dbReference type="SMR" id="Q20992"/>
<dbReference type="FunCoup" id="Q20992">
    <property type="interactions" value="2115"/>
</dbReference>
<dbReference type="STRING" id="6239.F58F9.7.3"/>
<dbReference type="PaxDb" id="6239-F58F9.7.1"/>
<dbReference type="PeptideAtlas" id="Q20992"/>
<dbReference type="EnsemblMetazoa" id="F58F9.7.1">
    <property type="protein sequence ID" value="F58F9.7.1"/>
    <property type="gene ID" value="WBGene00019060"/>
</dbReference>
<dbReference type="GeneID" id="177386"/>
<dbReference type="KEGG" id="cel:CELE_F58F9.7"/>
<dbReference type="UCSC" id="F58F9.7.1">
    <property type="organism name" value="c. elegans"/>
</dbReference>
<dbReference type="AGR" id="WB:WBGene00019060"/>
<dbReference type="CTD" id="177386"/>
<dbReference type="WormBase" id="F58F9.7">
    <property type="protein sequence ID" value="CE07304"/>
    <property type="gene ID" value="WBGene00019060"/>
    <property type="gene designation" value="acox-3"/>
</dbReference>
<dbReference type="eggNOG" id="KOG0135">
    <property type="taxonomic scope" value="Eukaryota"/>
</dbReference>
<dbReference type="GeneTree" id="ENSGT00940000159423"/>
<dbReference type="HOGENOM" id="CLU_014629_4_2_1"/>
<dbReference type="InParanoid" id="Q20992"/>
<dbReference type="OMA" id="SINKRFA"/>
<dbReference type="OrthoDB" id="538336at2759"/>
<dbReference type="PhylomeDB" id="Q20992"/>
<dbReference type="Reactome" id="R-CEL-389887">
    <property type="pathway name" value="Beta-oxidation of pristanoyl-CoA"/>
</dbReference>
<dbReference type="Reactome" id="R-CEL-9033241">
    <property type="pathway name" value="Peroxisomal protein import"/>
</dbReference>
<dbReference type="UniPathway" id="UPA00661"/>
<dbReference type="PRO" id="PR:Q20992"/>
<dbReference type="Proteomes" id="UP000001940">
    <property type="component" value="Chromosome IV"/>
</dbReference>
<dbReference type="Bgee" id="WBGene00019060">
    <property type="expression patterns" value="Expressed in larva and 3 other cell types or tissues"/>
</dbReference>
<dbReference type="GO" id="GO:0005777">
    <property type="term" value="C:peroxisome"/>
    <property type="evidence" value="ECO:0000314"/>
    <property type="project" value="UniProtKB"/>
</dbReference>
<dbReference type="GO" id="GO:0071949">
    <property type="term" value="F:FAD binding"/>
    <property type="evidence" value="ECO:0007669"/>
    <property type="project" value="InterPro"/>
</dbReference>
<dbReference type="GO" id="GO:0005504">
    <property type="term" value="F:fatty acid binding"/>
    <property type="evidence" value="ECO:0000318"/>
    <property type="project" value="GO_Central"/>
</dbReference>
<dbReference type="GO" id="GO:0050660">
    <property type="term" value="F:flavin adenine dinucleotide binding"/>
    <property type="evidence" value="ECO:0000318"/>
    <property type="project" value="GO_Central"/>
</dbReference>
<dbReference type="GO" id="GO:0016402">
    <property type="term" value="F:pristanoyl-CoA oxidase activity"/>
    <property type="evidence" value="ECO:0000318"/>
    <property type="project" value="GO_Central"/>
</dbReference>
<dbReference type="GO" id="GO:1904070">
    <property type="term" value="P:ascaroside biosynthetic process"/>
    <property type="evidence" value="ECO:0000315"/>
    <property type="project" value="UniProtKB"/>
</dbReference>
<dbReference type="GO" id="GO:0033540">
    <property type="term" value="P:fatty acid beta-oxidation using acyl-CoA oxidase"/>
    <property type="evidence" value="ECO:0000318"/>
    <property type="project" value="GO_Central"/>
</dbReference>
<dbReference type="CDD" id="cd01150">
    <property type="entry name" value="AXO"/>
    <property type="match status" value="1"/>
</dbReference>
<dbReference type="FunFam" id="1.20.140.10:FF:000007">
    <property type="entry name" value="Acyl-coenzyme A oxidase"/>
    <property type="match status" value="1"/>
</dbReference>
<dbReference type="FunFam" id="1.20.140.10:FF:000010">
    <property type="entry name" value="Acyl-coenzyme A oxidase"/>
    <property type="match status" value="1"/>
</dbReference>
<dbReference type="FunFam" id="2.40.110.10:FF:000040">
    <property type="entry name" value="Acyl-coenzyme A oxidase"/>
    <property type="match status" value="1"/>
</dbReference>
<dbReference type="Gene3D" id="2.40.110.10">
    <property type="entry name" value="Butyryl-CoA Dehydrogenase, subunit A, domain 2"/>
    <property type="match status" value="1"/>
</dbReference>
<dbReference type="Gene3D" id="1.20.140.10">
    <property type="entry name" value="Butyryl-CoA Dehydrogenase, subunit A, domain 3"/>
    <property type="match status" value="2"/>
</dbReference>
<dbReference type="InterPro" id="IPR034171">
    <property type="entry name" value="ACO"/>
</dbReference>
<dbReference type="InterPro" id="IPR055060">
    <property type="entry name" value="ACOX_C_alpha1"/>
</dbReference>
<dbReference type="InterPro" id="IPR046373">
    <property type="entry name" value="Acyl-CoA_Oxase/DH_mid-dom_sf"/>
</dbReference>
<dbReference type="InterPro" id="IPR012258">
    <property type="entry name" value="Acyl-CoA_oxidase"/>
</dbReference>
<dbReference type="InterPro" id="IPR002655">
    <property type="entry name" value="Acyl-CoA_oxidase_C"/>
</dbReference>
<dbReference type="InterPro" id="IPR036250">
    <property type="entry name" value="AcylCo_DH-like_C"/>
</dbReference>
<dbReference type="InterPro" id="IPR009100">
    <property type="entry name" value="AcylCoA_DH/oxidase_NM_dom_sf"/>
</dbReference>
<dbReference type="PANTHER" id="PTHR10909">
    <property type="entry name" value="ELECTRON TRANSPORT OXIDOREDUCTASE"/>
    <property type="match status" value="1"/>
</dbReference>
<dbReference type="PANTHER" id="PTHR10909:SF390">
    <property type="entry name" value="PEROXISOMAL ACYL-COENZYME A OXIDASE 3"/>
    <property type="match status" value="1"/>
</dbReference>
<dbReference type="Pfam" id="PF01756">
    <property type="entry name" value="ACOX"/>
    <property type="match status" value="1"/>
</dbReference>
<dbReference type="Pfam" id="PF22924">
    <property type="entry name" value="ACOX_C_alpha1"/>
    <property type="match status" value="1"/>
</dbReference>
<dbReference type="PIRSF" id="PIRSF000168">
    <property type="entry name" value="Acyl-CoA_oxidase"/>
    <property type="match status" value="1"/>
</dbReference>
<dbReference type="SUPFAM" id="SSF47203">
    <property type="entry name" value="Acyl-CoA dehydrogenase C-terminal domain-like"/>
    <property type="match status" value="2"/>
</dbReference>
<dbReference type="SUPFAM" id="SSF56645">
    <property type="entry name" value="Acyl-CoA dehydrogenase NM domain-like"/>
    <property type="match status" value="1"/>
</dbReference>